<name>SPDE7_HUMAN</name>
<organism>
    <name type="scientific">Homo sapiens</name>
    <name type="common">Human</name>
    <dbReference type="NCBI Taxonomy" id="9606"/>
    <lineage>
        <taxon>Eukaryota</taxon>
        <taxon>Metazoa</taxon>
        <taxon>Chordata</taxon>
        <taxon>Craniata</taxon>
        <taxon>Vertebrata</taxon>
        <taxon>Euteleostomi</taxon>
        <taxon>Mammalia</taxon>
        <taxon>Eutheria</taxon>
        <taxon>Euarchontoglires</taxon>
        <taxon>Primates</taxon>
        <taxon>Haplorrhini</taxon>
        <taxon>Catarrhini</taxon>
        <taxon>Hominidae</taxon>
        <taxon>Homo</taxon>
    </lineage>
</organism>
<sequence length="208" mass="25253">MEWWDKSEESLEEEPRKVLAPEPEEIWVAEMLCGLKMKLKRRRVSLVLPEHHEAFNRLLEDPVIKRFLAWDKGLRVSDKYLLAMVIVYFSRAGLPSWQYQCIHFFLALYLANDMEEDDEDPKQNIFYFLYGKTRSRIPLLRKRRFQLCRCMNPRARKNRSQIVLFQKLRFQFFCSMSCRAWVSPEELEEIQAYDPEHWVWARDRARLS</sequence>
<reference key="1">
    <citation type="journal article" date="2003" name="Nature">
        <title>The DNA sequence of human chromosome 7.</title>
        <authorList>
            <person name="Hillier L.W."/>
            <person name="Fulton R.S."/>
            <person name="Fulton L.A."/>
            <person name="Graves T.A."/>
            <person name="Pepin K.H."/>
            <person name="Wagner-McPherson C."/>
            <person name="Layman D."/>
            <person name="Maas J."/>
            <person name="Jaeger S."/>
            <person name="Walker R."/>
            <person name="Wylie K."/>
            <person name="Sekhon M."/>
            <person name="Becker M.C."/>
            <person name="O'Laughlin M.D."/>
            <person name="Schaller M.E."/>
            <person name="Fewell G.A."/>
            <person name="Delehaunty K.D."/>
            <person name="Miner T.L."/>
            <person name="Nash W.E."/>
            <person name="Cordes M."/>
            <person name="Du H."/>
            <person name="Sun H."/>
            <person name="Edwards J."/>
            <person name="Bradshaw-Cordum H."/>
            <person name="Ali J."/>
            <person name="Andrews S."/>
            <person name="Isak A."/>
            <person name="Vanbrunt A."/>
            <person name="Nguyen C."/>
            <person name="Du F."/>
            <person name="Lamar B."/>
            <person name="Courtney L."/>
            <person name="Kalicki J."/>
            <person name="Ozersky P."/>
            <person name="Bielicki L."/>
            <person name="Scott K."/>
            <person name="Holmes A."/>
            <person name="Harkins R."/>
            <person name="Harris A."/>
            <person name="Strong C.M."/>
            <person name="Hou S."/>
            <person name="Tomlinson C."/>
            <person name="Dauphin-Kohlberg S."/>
            <person name="Kozlowicz-Reilly A."/>
            <person name="Leonard S."/>
            <person name="Rohlfing T."/>
            <person name="Rock S.M."/>
            <person name="Tin-Wollam A.-M."/>
            <person name="Abbott A."/>
            <person name="Minx P."/>
            <person name="Maupin R."/>
            <person name="Strowmatt C."/>
            <person name="Latreille P."/>
            <person name="Miller N."/>
            <person name="Johnson D."/>
            <person name="Murray J."/>
            <person name="Woessner J.P."/>
            <person name="Wendl M.C."/>
            <person name="Yang S.-P."/>
            <person name="Schultz B.R."/>
            <person name="Wallis J.W."/>
            <person name="Spieth J."/>
            <person name="Bieri T.A."/>
            <person name="Nelson J.O."/>
            <person name="Berkowicz N."/>
            <person name="Wohldmann P.E."/>
            <person name="Cook L.L."/>
            <person name="Hickenbotham M.T."/>
            <person name="Eldred J."/>
            <person name="Williams D."/>
            <person name="Bedell J.A."/>
            <person name="Mardis E.R."/>
            <person name="Clifton S.W."/>
            <person name="Chissoe S.L."/>
            <person name="Marra M.A."/>
            <person name="Raymond C."/>
            <person name="Haugen E."/>
            <person name="Gillett W."/>
            <person name="Zhou Y."/>
            <person name="James R."/>
            <person name="Phelps K."/>
            <person name="Iadanoto S."/>
            <person name="Bubb K."/>
            <person name="Simms E."/>
            <person name="Levy R."/>
            <person name="Clendenning J."/>
            <person name="Kaul R."/>
            <person name="Kent W.J."/>
            <person name="Furey T.S."/>
            <person name="Baertsch R.A."/>
            <person name="Brent M.R."/>
            <person name="Keibler E."/>
            <person name="Flicek P."/>
            <person name="Bork P."/>
            <person name="Suyama M."/>
            <person name="Bailey J.A."/>
            <person name="Portnoy M.E."/>
            <person name="Torrents D."/>
            <person name="Chinwalla A.T."/>
            <person name="Gish W.R."/>
            <person name="Eddy S.R."/>
            <person name="McPherson J.D."/>
            <person name="Olson M.V."/>
            <person name="Eichler E.E."/>
            <person name="Green E.D."/>
            <person name="Waterston R.H."/>
            <person name="Wilson R.K."/>
        </authorList>
    </citation>
    <scope>NUCLEOTIDE SEQUENCE [LARGE SCALE GENOMIC DNA]</scope>
</reference>
<reference key="2">
    <citation type="journal article" date="2004" name="Genome Res.">
        <title>The status, quality, and expansion of the NIH full-length cDNA project: the Mammalian Gene Collection (MGC).</title>
        <authorList>
            <consortium name="The MGC Project Team"/>
        </authorList>
    </citation>
    <scope>NUCLEOTIDE SEQUENCE [LARGE SCALE MRNA]</scope>
</reference>
<keyword id="KW-1185">Reference proteome</keyword>
<gene>
    <name type="primary">SPDYE7P</name>
</gene>
<protein>
    <recommendedName>
        <fullName>Putative speedy protein E7</fullName>
    </recommendedName>
    <alternativeName>
        <fullName>Speedy protein E7 pseudogene</fullName>
    </alternativeName>
</protein>
<comment type="similarity">
    <text evidence="1">Belongs to the Speedy/Ringo family.</text>
</comment>
<comment type="caution">
    <text evidence="1">Could be the product of a pseudogene.</text>
</comment>
<feature type="chain" id="PRO_0000348268" description="Putative speedy protein E7">
    <location>
        <begin position="1"/>
        <end position="208"/>
    </location>
</feature>
<proteinExistence type="uncertain"/>
<dbReference type="EMBL" id="AC005488">
    <property type="status" value="NOT_ANNOTATED_CDS"/>
    <property type="molecule type" value="Genomic_DNA"/>
</dbReference>
<dbReference type="EMBL" id="BC100974">
    <property type="status" value="NOT_ANNOTATED_CDS"/>
    <property type="molecule type" value="mRNA"/>
</dbReference>
<dbReference type="SMR" id="Q495Y7"/>
<dbReference type="IntAct" id="Q495Y7">
    <property type="interactions" value="11"/>
</dbReference>
<dbReference type="BioMuta" id="HGNC:35466"/>
<dbReference type="DMDM" id="121943317"/>
<dbReference type="jPOST" id="Q495Y7"/>
<dbReference type="MassIVE" id="Q495Y7"/>
<dbReference type="PeptideAtlas" id="Q495Y7"/>
<dbReference type="AGR" id="HGNC:35466"/>
<dbReference type="GeneCards" id="SPDYE7P"/>
<dbReference type="HGNC" id="HGNC:35466">
    <property type="gene designation" value="SPDYE7P"/>
</dbReference>
<dbReference type="neXtProt" id="NX_Q495Y7"/>
<dbReference type="InParanoid" id="Q495Y7"/>
<dbReference type="PAN-GO" id="Q495Y7">
    <property type="GO annotations" value="1 GO annotation based on evolutionary models"/>
</dbReference>
<dbReference type="PhylomeDB" id="Q495Y7"/>
<dbReference type="Pharos" id="Q495Y7">
    <property type="development level" value="Tdark"/>
</dbReference>
<dbReference type="Proteomes" id="UP000005640">
    <property type="component" value="Unplaced"/>
</dbReference>
<dbReference type="RNAct" id="Q495Y7">
    <property type="molecule type" value="protein"/>
</dbReference>
<dbReference type="GO" id="GO:0019901">
    <property type="term" value="F:protein kinase binding"/>
    <property type="evidence" value="ECO:0000318"/>
    <property type="project" value="GO_Central"/>
</dbReference>
<dbReference type="InterPro" id="IPR020984">
    <property type="entry name" value="Speedy"/>
</dbReference>
<dbReference type="PANTHER" id="PTHR31156">
    <property type="entry name" value="WBSCR19-LIKE PROTEIN"/>
    <property type="match status" value="1"/>
</dbReference>
<dbReference type="Pfam" id="PF11357">
    <property type="entry name" value="Spy1"/>
    <property type="match status" value="1"/>
</dbReference>
<accession>Q495Y7</accession>
<evidence type="ECO:0000305" key="1"/>